<name>RM02_YARLI</name>
<protein>
    <recommendedName>
        <fullName evidence="2">Large ribosomal subunit protein bL27m</fullName>
    </recommendedName>
    <alternativeName>
        <fullName>54S ribosomal protein L2, mitochondrial</fullName>
    </alternativeName>
</protein>
<organism>
    <name type="scientific">Yarrowia lipolytica (strain CLIB 122 / E 150)</name>
    <name type="common">Yeast</name>
    <name type="synonym">Candida lipolytica</name>
    <dbReference type="NCBI Taxonomy" id="284591"/>
    <lineage>
        <taxon>Eukaryota</taxon>
        <taxon>Fungi</taxon>
        <taxon>Dikarya</taxon>
        <taxon>Ascomycota</taxon>
        <taxon>Saccharomycotina</taxon>
        <taxon>Dipodascomycetes</taxon>
        <taxon>Dipodascales</taxon>
        <taxon>Dipodascales incertae sedis</taxon>
        <taxon>Yarrowia</taxon>
    </lineage>
</organism>
<keyword id="KW-0496">Mitochondrion</keyword>
<keyword id="KW-1185">Reference proteome</keyword>
<keyword id="KW-0687">Ribonucleoprotein</keyword>
<keyword id="KW-0689">Ribosomal protein</keyword>
<keyword id="KW-0809">Transit peptide</keyword>
<gene>
    <name type="primary">MRPL2</name>
    <name type="ordered locus">YALI0D12320g</name>
</gene>
<dbReference type="EMBL" id="CR382130">
    <property type="protein sequence ID" value="CAG80926.1"/>
    <property type="molecule type" value="Genomic_DNA"/>
</dbReference>
<dbReference type="RefSeq" id="XP_502738.1">
    <property type="nucleotide sequence ID" value="XM_502738.1"/>
</dbReference>
<dbReference type="SMR" id="Q6C9C4"/>
<dbReference type="FunCoup" id="Q6C9C4">
    <property type="interactions" value="274"/>
</dbReference>
<dbReference type="STRING" id="284591.Q6C9C4"/>
<dbReference type="EnsemblFungi" id="CAG80926">
    <property type="protein sequence ID" value="CAG80926"/>
    <property type="gene ID" value="YALI0_D12320g"/>
</dbReference>
<dbReference type="KEGG" id="yli:2910133"/>
<dbReference type="VEuPathDB" id="FungiDB:YALI0_D12320g"/>
<dbReference type="HOGENOM" id="CLU_063752_0_0_1"/>
<dbReference type="InParanoid" id="Q6C9C4"/>
<dbReference type="OrthoDB" id="119825at4891"/>
<dbReference type="Proteomes" id="UP000001300">
    <property type="component" value="Chromosome D"/>
</dbReference>
<dbReference type="GO" id="GO:0005762">
    <property type="term" value="C:mitochondrial large ribosomal subunit"/>
    <property type="evidence" value="ECO:0000318"/>
    <property type="project" value="GO_Central"/>
</dbReference>
<dbReference type="GO" id="GO:0003735">
    <property type="term" value="F:structural constituent of ribosome"/>
    <property type="evidence" value="ECO:0000318"/>
    <property type="project" value="GO_Central"/>
</dbReference>
<dbReference type="GO" id="GO:0006412">
    <property type="term" value="P:translation"/>
    <property type="evidence" value="ECO:0007669"/>
    <property type="project" value="InterPro"/>
</dbReference>
<dbReference type="FunFam" id="2.40.50.100:FF:000042">
    <property type="entry name" value="50S ribosomal protein L27"/>
    <property type="match status" value="1"/>
</dbReference>
<dbReference type="Gene3D" id="2.40.50.100">
    <property type="match status" value="1"/>
</dbReference>
<dbReference type="InterPro" id="IPR001684">
    <property type="entry name" value="Ribosomal_bL27"/>
</dbReference>
<dbReference type="NCBIfam" id="TIGR00062">
    <property type="entry name" value="L27"/>
    <property type="match status" value="1"/>
</dbReference>
<dbReference type="PANTHER" id="PTHR15893:SF0">
    <property type="entry name" value="LARGE RIBOSOMAL SUBUNIT PROTEIN BL27M"/>
    <property type="match status" value="1"/>
</dbReference>
<dbReference type="PANTHER" id="PTHR15893">
    <property type="entry name" value="RIBOSOMAL PROTEIN L27"/>
    <property type="match status" value="1"/>
</dbReference>
<dbReference type="Pfam" id="PF01016">
    <property type="entry name" value="Ribosomal_L27"/>
    <property type="match status" value="1"/>
</dbReference>
<dbReference type="PRINTS" id="PR00063">
    <property type="entry name" value="RIBOSOMALL27"/>
</dbReference>
<dbReference type="SUPFAM" id="SSF110324">
    <property type="entry name" value="Ribosomal L27 protein-like"/>
    <property type="match status" value="1"/>
</dbReference>
<evidence type="ECO:0000250" key="1"/>
<evidence type="ECO:0000305" key="2"/>
<comment type="function">
    <text evidence="1">Component of the large subunit of mitochondrial ribosome.</text>
</comment>
<comment type="subcellular location">
    <subcellularLocation>
        <location evidence="1">Mitochondrion</location>
    </subcellularLocation>
</comment>
<comment type="similarity">
    <text evidence="2">Belongs to the bacterial ribosomal protein bL27 family.</text>
</comment>
<reference key="1">
    <citation type="journal article" date="2004" name="Nature">
        <title>Genome evolution in yeasts.</title>
        <authorList>
            <person name="Dujon B."/>
            <person name="Sherman D."/>
            <person name="Fischer G."/>
            <person name="Durrens P."/>
            <person name="Casaregola S."/>
            <person name="Lafontaine I."/>
            <person name="de Montigny J."/>
            <person name="Marck C."/>
            <person name="Neuveglise C."/>
            <person name="Talla E."/>
            <person name="Goffard N."/>
            <person name="Frangeul L."/>
            <person name="Aigle M."/>
            <person name="Anthouard V."/>
            <person name="Babour A."/>
            <person name="Barbe V."/>
            <person name="Barnay S."/>
            <person name="Blanchin S."/>
            <person name="Beckerich J.-M."/>
            <person name="Beyne E."/>
            <person name="Bleykasten C."/>
            <person name="Boisrame A."/>
            <person name="Boyer J."/>
            <person name="Cattolico L."/>
            <person name="Confanioleri F."/>
            <person name="de Daruvar A."/>
            <person name="Despons L."/>
            <person name="Fabre E."/>
            <person name="Fairhead C."/>
            <person name="Ferry-Dumazet H."/>
            <person name="Groppi A."/>
            <person name="Hantraye F."/>
            <person name="Hennequin C."/>
            <person name="Jauniaux N."/>
            <person name="Joyet P."/>
            <person name="Kachouri R."/>
            <person name="Kerrest A."/>
            <person name="Koszul R."/>
            <person name="Lemaire M."/>
            <person name="Lesur I."/>
            <person name="Ma L."/>
            <person name="Muller H."/>
            <person name="Nicaud J.-M."/>
            <person name="Nikolski M."/>
            <person name="Oztas S."/>
            <person name="Ozier-Kalogeropoulos O."/>
            <person name="Pellenz S."/>
            <person name="Potier S."/>
            <person name="Richard G.-F."/>
            <person name="Straub M.-L."/>
            <person name="Suleau A."/>
            <person name="Swennen D."/>
            <person name="Tekaia F."/>
            <person name="Wesolowski-Louvel M."/>
            <person name="Westhof E."/>
            <person name="Wirth B."/>
            <person name="Zeniou-Meyer M."/>
            <person name="Zivanovic Y."/>
            <person name="Bolotin-Fukuhara M."/>
            <person name="Thierry A."/>
            <person name="Bouchier C."/>
            <person name="Caudron B."/>
            <person name="Scarpelli C."/>
            <person name="Gaillardin C."/>
            <person name="Weissenbach J."/>
            <person name="Wincker P."/>
            <person name="Souciet J.-L."/>
        </authorList>
    </citation>
    <scope>NUCLEOTIDE SEQUENCE [LARGE SCALE GENOMIC DNA]</scope>
    <source>
        <strain>CLIB 122 / E 150</strain>
    </source>
</reference>
<proteinExistence type="inferred from homology"/>
<accession>Q6C9C4</accession>
<feature type="transit peptide" description="Mitochondrion" evidence="1">
    <location>
        <begin position="1"/>
        <end position="41"/>
    </location>
</feature>
<feature type="chain" id="PRO_0000030502" description="Large ribosomal subunit protein bL27m">
    <location>
        <begin position="42"/>
        <end position="374"/>
    </location>
</feature>
<sequence>MLRLSGVKSAVRARAAAGAAFSVSLSGPQAVSLLALPLVRHATKRAGGGKTNLKDSIGRRLGVKATEGTYVQPSDIIYRQRGTKFYPGENTWIGRDHTIYAKEPGYVRFYYDPFHPTRRFVGVGLTPEARLPTDHMAPRARRFGRNVISDPKRAEAELAWRPNKEQQLLEEISERRAVKQAEEQALTDKLAAKLKELGFDNSELAARAQKMAHYRTLGWTNAEAARFADAFLNTSSDVKDFDAKFEVTKFGTVVPKSSPETVEKELNETRDKLTKVRQPNAFISLSQIAKIDKILDATVYLSQSQKEQLADEFKVTASLLEAVQPHEEVVKAAKKGKGKLVKVYNVQRKGIDYVLAPKDAHFSEDIAFQKEFVH</sequence>